<feature type="chain" id="PRO_0000267318" description="7-methyl-GTP pyrophosphatase">
    <location>
        <begin position="1"/>
        <end position="199"/>
    </location>
</feature>
<feature type="active site" description="Proton acceptor" evidence="1">
    <location>
        <position position="76"/>
    </location>
</feature>
<feature type="site" description="Important for substrate specificity" evidence="1">
    <location>
        <position position="18"/>
    </location>
</feature>
<feature type="site" description="Important for substrate specificity" evidence="1">
    <location>
        <position position="77"/>
    </location>
</feature>
<feature type="site" description="Important for substrate specificity" evidence="1">
    <location>
        <position position="161"/>
    </location>
</feature>
<gene>
    <name type="ordered locus">HCH_02139</name>
</gene>
<protein>
    <recommendedName>
        <fullName evidence="1">7-methyl-GTP pyrophosphatase</fullName>
        <shortName evidence="1">m(7)GTP pyrophosphatase</shortName>
        <ecNumber evidence="1">3.6.1.-</ecNumber>
    </recommendedName>
</protein>
<keyword id="KW-0963">Cytoplasm</keyword>
<keyword id="KW-0378">Hydrolase</keyword>
<keyword id="KW-0546">Nucleotide metabolism</keyword>
<keyword id="KW-1185">Reference proteome</keyword>
<organism>
    <name type="scientific">Hahella chejuensis (strain KCTC 2396)</name>
    <dbReference type="NCBI Taxonomy" id="349521"/>
    <lineage>
        <taxon>Bacteria</taxon>
        <taxon>Pseudomonadati</taxon>
        <taxon>Pseudomonadota</taxon>
        <taxon>Gammaproteobacteria</taxon>
        <taxon>Oceanospirillales</taxon>
        <taxon>Hahellaceae</taxon>
        <taxon>Hahella</taxon>
    </lineage>
</organism>
<sequence length="199" mass="22153">MTNKSPHPSIILGSTSPYRAALLQKLNLNFQQAAPYFDEQITPTSLAPRDIAINFAKEKAESLREQFPDHLIIGSDQTAALNGLLLRKPGDKATAIKQLAACSGESVTFYSGLALINTRLNTTRTCVDWQTVYFRDLSREEIERYIELEKPYDCVGSFKVEGLGISLFEKIEGKDPNTLIGLPLIELITLLKKEGLRIP</sequence>
<proteinExistence type="inferred from homology"/>
<name>NTPPB_HAHCH</name>
<accession>Q2SK56</accession>
<evidence type="ECO:0000255" key="1">
    <source>
        <dbReference type="HAMAP-Rule" id="MF_00528"/>
    </source>
</evidence>
<dbReference type="EC" id="3.6.1.-" evidence="1"/>
<dbReference type="EMBL" id="CP000155">
    <property type="protein sequence ID" value="ABC28968.1"/>
    <property type="molecule type" value="Genomic_DNA"/>
</dbReference>
<dbReference type="RefSeq" id="WP_011396038.1">
    <property type="nucleotide sequence ID" value="NC_007645.1"/>
</dbReference>
<dbReference type="SMR" id="Q2SK56"/>
<dbReference type="STRING" id="349521.HCH_02139"/>
<dbReference type="KEGG" id="hch:HCH_02139"/>
<dbReference type="eggNOG" id="COG0424">
    <property type="taxonomic scope" value="Bacteria"/>
</dbReference>
<dbReference type="HOGENOM" id="CLU_040416_1_0_6"/>
<dbReference type="OrthoDB" id="9813694at2"/>
<dbReference type="Proteomes" id="UP000000238">
    <property type="component" value="Chromosome"/>
</dbReference>
<dbReference type="GO" id="GO:0005737">
    <property type="term" value="C:cytoplasm"/>
    <property type="evidence" value="ECO:0007669"/>
    <property type="project" value="UniProtKB-SubCell"/>
</dbReference>
<dbReference type="GO" id="GO:0047429">
    <property type="term" value="F:nucleoside triphosphate diphosphatase activity"/>
    <property type="evidence" value="ECO:0007669"/>
    <property type="project" value="InterPro"/>
</dbReference>
<dbReference type="GO" id="GO:0009117">
    <property type="term" value="P:nucleotide metabolic process"/>
    <property type="evidence" value="ECO:0007669"/>
    <property type="project" value="UniProtKB-KW"/>
</dbReference>
<dbReference type="CDD" id="cd00555">
    <property type="entry name" value="Maf"/>
    <property type="match status" value="1"/>
</dbReference>
<dbReference type="Gene3D" id="3.90.950.10">
    <property type="match status" value="1"/>
</dbReference>
<dbReference type="HAMAP" id="MF_00528">
    <property type="entry name" value="Maf"/>
    <property type="match status" value="1"/>
</dbReference>
<dbReference type="InterPro" id="IPR029001">
    <property type="entry name" value="ITPase-like_fam"/>
</dbReference>
<dbReference type="InterPro" id="IPR003697">
    <property type="entry name" value="Maf-like"/>
</dbReference>
<dbReference type="NCBIfam" id="TIGR00172">
    <property type="entry name" value="maf"/>
    <property type="match status" value="1"/>
</dbReference>
<dbReference type="PANTHER" id="PTHR43213:SF10">
    <property type="entry name" value="7-METHYL-GTP PYROPHOSPHATASE"/>
    <property type="match status" value="1"/>
</dbReference>
<dbReference type="PANTHER" id="PTHR43213">
    <property type="entry name" value="BIFUNCTIONAL DTTP/UTP PYROPHOSPHATASE/METHYLTRANSFERASE PROTEIN-RELATED"/>
    <property type="match status" value="1"/>
</dbReference>
<dbReference type="Pfam" id="PF02545">
    <property type="entry name" value="Maf"/>
    <property type="match status" value="1"/>
</dbReference>
<dbReference type="PIRSF" id="PIRSF006305">
    <property type="entry name" value="Maf"/>
    <property type="match status" value="1"/>
</dbReference>
<dbReference type="SUPFAM" id="SSF52972">
    <property type="entry name" value="ITPase-like"/>
    <property type="match status" value="1"/>
</dbReference>
<reference key="1">
    <citation type="journal article" date="2005" name="Nucleic Acids Res.">
        <title>Genomic blueprint of Hahella chejuensis, a marine microbe producing an algicidal agent.</title>
        <authorList>
            <person name="Jeong H."/>
            <person name="Yim J.H."/>
            <person name="Lee C."/>
            <person name="Choi S.-H."/>
            <person name="Park Y.K."/>
            <person name="Yoon S.H."/>
            <person name="Hur C.-G."/>
            <person name="Kang H.-Y."/>
            <person name="Kim D."/>
            <person name="Lee H.H."/>
            <person name="Park K.H."/>
            <person name="Park S.-H."/>
            <person name="Park H.-S."/>
            <person name="Lee H.K."/>
            <person name="Oh T.K."/>
            <person name="Kim J.F."/>
        </authorList>
    </citation>
    <scope>NUCLEOTIDE SEQUENCE [LARGE SCALE GENOMIC DNA]</scope>
    <source>
        <strain>KCTC 2396</strain>
    </source>
</reference>
<comment type="function">
    <text evidence="1">Nucleoside triphosphate pyrophosphatase that hydrolyzes 7-methyl-GTP (m(7)GTP). May have a dual role in cell division arrest and in preventing the incorporation of modified nucleotides into cellular nucleic acids.</text>
</comment>
<comment type="catalytic activity">
    <reaction evidence="1">
        <text>N(7)-methyl-GTP + H2O = N(7)-methyl-GMP + diphosphate + H(+)</text>
        <dbReference type="Rhea" id="RHEA:58744"/>
        <dbReference type="ChEBI" id="CHEBI:15377"/>
        <dbReference type="ChEBI" id="CHEBI:15378"/>
        <dbReference type="ChEBI" id="CHEBI:33019"/>
        <dbReference type="ChEBI" id="CHEBI:58285"/>
        <dbReference type="ChEBI" id="CHEBI:87133"/>
    </reaction>
</comment>
<comment type="cofactor">
    <cofactor evidence="1">
        <name>a divalent metal cation</name>
        <dbReference type="ChEBI" id="CHEBI:60240"/>
    </cofactor>
</comment>
<comment type="subcellular location">
    <subcellularLocation>
        <location evidence="1">Cytoplasm</location>
    </subcellularLocation>
</comment>
<comment type="similarity">
    <text evidence="1">Belongs to the Maf family. YceF subfamily.</text>
</comment>